<keyword id="KW-0223">Dioxygenase</keyword>
<keyword id="KW-0284">Flavonoid biosynthesis</keyword>
<keyword id="KW-0408">Iron</keyword>
<keyword id="KW-0479">Metal-binding</keyword>
<keyword id="KW-0560">Oxidoreductase</keyword>
<keyword id="KW-0847">Vitamin C</keyword>
<accession>Q05965</accession>
<reference key="1">
    <citation type="journal article" date="1993" name="Eur. J. Biochem.">
        <title>Molecular characterization of flavanone 3 beta-hydroxylases. Consensus sequence, comparison with related enzymes and the role of conserved histidine residues.</title>
        <authorList>
            <person name="Britsch L."/>
            <person name="Dedio J."/>
            <person name="Saedler H."/>
            <person name="Forkmann G."/>
        </authorList>
    </citation>
    <scope>NUCLEOTIDE SEQUENCE [MRNA]</scope>
    <source>
        <tissue>Flower bud</tissue>
    </source>
</reference>
<comment type="function">
    <text>Catalyzes the 3-beta-hydroxylation of 2S-flavanones to 2R,3R-dihydroflavonols which are intermediates in the biosynthesis of flavonols, anthocyanidins, catechins and proanthocyanidins in plants.</text>
</comment>
<comment type="catalytic activity">
    <reaction evidence="1">
        <text>a (2S)-flavan-4-one + 2-oxoglutarate + O2 = a (2R,3R)-dihydroflavonol + succinate + CO2</text>
        <dbReference type="Rhea" id="RHEA:18621"/>
        <dbReference type="ChEBI" id="CHEBI:15379"/>
        <dbReference type="ChEBI" id="CHEBI:16526"/>
        <dbReference type="ChEBI" id="CHEBI:16810"/>
        <dbReference type="ChEBI" id="CHEBI:30031"/>
        <dbReference type="ChEBI" id="CHEBI:138188"/>
        <dbReference type="ChEBI" id="CHEBI:140377"/>
        <dbReference type="EC" id="1.14.11.9"/>
    </reaction>
</comment>
<comment type="cofactor">
    <cofactor evidence="2">
        <name>Fe(2+)</name>
        <dbReference type="ChEBI" id="CHEBI:29033"/>
    </cofactor>
    <text evidence="2">Binds 1 Fe(2+) ion per subunit.</text>
</comment>
<comment type="cofactor">
    <cofactor>
        <name>L-ascorbate</name>
        <dbReference type="ChEBI" id="CHEBI:38290"/>
    </cofactor>
</comment>
<comment type="pathway">
    <text>Secondary metabolite biosynthesis; flavonoid biosynthesis.</text>
</comment>
<comment type="similarity">
    <text evidence="3">Belongs to the iron/ascorbate-dependent oxidoreductase family.</text>
</comment>
<feature type="chain" id="PRO_0000067288" description="Naringenin,2-oxoglutarate 3-dioxygenase">
    <location>
        <begin position="1" status="less than"/>
        <end position="357"/>
    </location>
</feature>
<feature type="domain" description="Fe2OG dioxygenase" evidence="2">
    <location>
        <begin position="189"/>
        <end position="293"/>
    </location>
</feature>
<feature type="binding site" evidence="2">
    <location>
        <position position="216"/>
    </location>
    <ligand>
        <name>Fe cation</name>
        <dbReference type="ChEBI" id="CHEBI:24875"/>
    </ligand>
</feature>
<feature type="binding site" evidence="2">
    <location>
        <position position="218"/>
    </location>
    <ligand>
        <name>Fe cation</name>
        <dbReference type="ChEBI" id="CHEBI:24875"/>
    </ligand>
</feature>
<feature type="binding site" evidence="2">
    <location>
        <position position="274"/>
    </location>
    <ligand>
        <name>Fe cation</name>
        <dbReference type="ChEBI" id="CHEBI:24875"/>
    </ligand>
</feature>
<feature type="binding site" evidence="2">
    <location>
        <position position="284"/>
    </location>
    <ligand>
        <name>2-oxoglutarate</name>
        <dbReference type="ChEBI" id="CHEBI:16810"/>
    </ligand>
</feature>
<feature type="non-terminal residue">
    <location>
        <position position="1"/>
    </location>
</feature>
<sequence length="357" mass="39982">APGTLTELAGESKLNSKFVRDEDERPKVAYNEFSDEIPVISLAGIDDVDGKRGEICREIVEACENWGIFQVVDHGVDTSLVADMTRLARDFFALPPEEKLRFDMSGGKKGGFIVSSHLQGEAVQDWREIVTYFSYPVRNRDYSRWPDKPQGWAKVTEEYSEKLMGLACKLLEVLSEAMGLEKESLTNACVDMDQKIVVNYYPKCPQPDLTLGLKRHTDPGTITLLLQDQVGGLQATRDDGNTWITVQPVEGAFVVNLGDHGHFLSNGRFKNADHQAVVNSNSSRLSIATFQNPAPEATVYPLKVREGEKAIMEEPITFAEMYKRKMGRDLELARLKKLAKEEHNHKEAAKPLDQILA</sequence>
<gene>
    <name type="primary">FHT</name>
</gene>
<evidence type="ECO:0000250" key="1">
    <source>
        <dbReference type="UniProtKB" id="Q7XZQ7"/>
    </source>
</evidence>
<evidence type="ECO:0000255" key="2">
    <source>
        <dbReference type="PROSITE-ProRule" id="PRU00805"/>
    </source>
</evidence>
<evidence type="ECO:0000305" key="3"/>
<protein>
    <recommendedName>
        <fullName>Naringenin,2-oxoglutarate 3-dioxygenase</fullName>
        <ecNumber evidence="1">1.14.11.9</ecNumber>
    </recommendedName>
    <alternativeName>
        <fullName>FHT</fullName>
    </alternativeName>
    <alternativeName>
        <fullName>Flavanone-3-hydroxylase</fullName>
        <shortName>F3H</shortName>
    </alternativeName>
</protein>
<name>FL3H_MATIN</name>
<organism>
    <name type="scientific">Matthiola incana</name>
    <name type="common">Common stock</name>
    <name type="synonym">Cheiranthus incanus</name>
    <dbReference type="NCBI Taxonomy" id="3724"/>
    <lineage>
        <taxon>Eukaryota</taxon>
        <taxon>Viridiplantae</taxon>
        <taxon>Streptophyta</taxon>
        <taxon>Embryophyta</taxon>
        <taxon>Tracheophyta</taxon>
        <taxon>Spermatophyta</taxon>
        <taxon>Magnoliopsida</taxon>
        <taxon>eudicotyledons</taxon>
        <taxon>Gunneridae</taxon>
        <taxon>Pentapetalae</taxon>
        <taxon>rosids</taxon>
        <taxon>malvids</taxon>
        <taxon>Brassicales</taxon>
        <taxon>Brassicaceae</taxon>
        <taxon>Anchonieae</taxon>
        <taxon>Matthiola</taxon>
    </lineage>
</organism>
<dbReference type="EC" id="1.14.11.9" evidence="1"/>
<dbReference type="EMBL" id="X72594">
    <property type="protein sequence ID" value="CAA51192.1"/>
    <property type="molecule type" value="mRNA"/>
</dbReference>
<dbReference type="PIR" id="S38338">
    <property type="entry name" value="S38338"/>
</dbReference>
<dbReference type="SMR" id="Q05965"/>
<dbReference type="UniPathway" id="UPA00154"/>
<dbReference type="GO" id="GO:0045486">
    <property type="term" value="F:flavanone 3-dioxygenase activity"/>
    <property type="evidence" value="ECO:0007669"/>
    <property type="project" value="UniProtKB-EC"/>
</dbReference>
<dbReference type="GO" id="GO:0031418">
    <property type="term" value="F:L-ascorbic acid binding"/>
    <property type="evidence" value="ECO:0007669"/>
    <property type="project" value="UniProtKB-KW"/>
</dbReference>
<dbReference type="GO" id="GO:0046872">
    <property type="term" value="F:metal ion binding"/>
    <property type="evidence" value="ECO:0007669"/>
    <property type="project" value="UniProtKB-KW"/>
</dbReference>
<dbReference type="GO" id="GO:0009813">
    <property type="term" value="P:flavonoid biosynthetic process"/>
    <property type="evidence" value="ECO:0007669"/>
    <property type="project" value="UniProtKB-UniPathway"/>
</dbReference>
<dbReference type="FunFam" id="2.60.120.330:FF:000016">
    <property type="entry name" value="Naringenin,2-oxoglutarate 3-dioxygenase"/>
    <property type="match status" value="1"/>
</dbReference>
<dbReference type="Gene3D" id="2.60.120.330">
    <property type="entry name" value="B-lactam Antibiotic, Isopenicillin N Synthase, Chain"/>
    <property type="match status" value="1"/>
</dbReference>
<dbReference type="InterPro" id="IPR026992">
    <property type="entry name" value="DIOX_N"/>
</dbReference>
<dbReference type="InterPro" id="IPR044861">
    <property type="entry name" value="IPNS-like_FE2OG_OXY"/>
</dbReference>
<dbReference type="InterPro" id="IPR027443">
    <property type="entry name" value="IPNS-like_sf"/>
</dbReference>
<dbReference type="InterPro" id="IPR005123">
    <property type="entry name" value="Oxoglu/Fe-dep_dioxygenase_dom"/>
</dbReference>
<dbReference type="InterPro" id="IPR050295">
    <property type="entry name" value="Plant_2OG-oxidoreductases"/>
</dbReference>
<dbReference type="PANTHER" id="PTHR47991">
    <property type="entry name" value="OXOGLUTARATE/IRON-DEPENDENT DIOXYGENASE"/>
    <property type="match status" value="1"/>
</dbReference>
<dbReference type="Pfam" id="PF03171">
    <property type="entry name" value="2OG-FeII_Oxy"/>
    <property type="match status" value="1"/>
</dbReference>
<dbReference type="Pfam" id="PF14226">
    <property type="entry name" value="DIOX_N"/>
    <property type="match status" value="1"/>
</dbReference>
<dbReference type="SUPFAM" id="SSF51197">
    <property type="entry name" value="Clavaminate synthase-like"/>
    <property type="match status" value="1"/>
</dbReference>
<dbReference type="PROSITE" id="PS51471">
    <property type="entry name" value="FE2OG_OXY"/>
    <property type="match status" value="1"/>
</dbReference>
<proteinExistence type="evidence at transcript level"/>